<sequence>MLKSKIHRATITDACIDYEGSITIDKNLMQAANLLPYEQVHVVNVNNGTRLETYVIEGPAGSGQICLNGAAARMGMKGDKVIILGYSLITEEDTLTHQPNLVYVDSLNRITKVKNGVASRNLEV</sequence>
<feature type="chain" id="PRO_0000236867" description="Aspartate 1-decarboxylase beta chain" evidence="1">
    <location>
        <begin position="1"/>
        <end position="20"/>
    </location>
</feature>
<feature type="chain" id="PRO_0000236868" description="Aspartate 1-decarboxylase alpha chain" evidence="1">
    <location>
        <begin position="21"/>
        <end position="124"/>
    </location>
</feature>
<feature type="active site" description="Schiff-base intermediate with substrate; via pyruvic acid" evidence="1">
    <location>
        <position position="21"/>
    </location>
</feature>
<feature type="active site" description="Proton donor" evidence="1">
    <location>
        <position position="54"/>
    </location>
</feature>
<feature type="binding site" evidence="1">
    <location>
        <position position="53"/>
    </location>
    <ligand>
        <name>substrate</name>
    </ligand>
</feature>
<feature type="binding site" evidence="1">
    <location>
        <begin position="69"/>
        <end position="71"/>
    </location>
    <ligand>
        <name>substrate</name>
    </ligand>
</feature>
<feature type="modified residue" description="Pyruvic acid (Ser)" evidence="1">
    <location>
        <position position="21"/>
    </location>
</feature>
<name>PAND_DEHM1</name>
<organism>
    <name type="scientific">Dehalococcoides mccartyi (strain ATCC BAA-2266 / KCTC 15142 / 195)</name>
    <name type="common">Dehalococcoides ethenogenes (strain 195)</name>
    <dbReference type="NCBI Taxonomy" id="243164"/>
    <lineage>
        <taxon>Bacteria</taxon>
        <taxon>Bacillati</taxon>
        <taxon>Chloroflexota</taxon>
        <taxon>Dehalococcoidia</taxon>
        <taxon>Dehalococcoidales</taxon>
        <taxon>Dehalococcoidaceae</taxon>
        <taxon>Dehalococcoides</taxon>
    </lineage>
</organism>
<accession>Q3Z8B5</accession>
<dbReference type="EC" id="4.1.1.11" evidence="1"/>
<dbReference type="EMBL" id="CP000027">
    <property type="protein sequence ID" value="AAW39885.1"/>
    <property type="molecule type" value="Genomic_DNA"/>
</dbReference>
<dbReference type="RefSeq" id="WP_010936535.1">
    <property type="nucleotide sequence ID" value="NC_002936.3"/>
</dbReference>
<dbReference type="SMR" id="Q3Z8B5"/>
<dbReference type="FunCoup" id="Q3Z8B5">
    <property type="interactions" value="149"/>
</dbReference>
<dbReference type="STRING" id="243164.DET0802"/>
<dbReference type="GeneID" id="3229847"/>
<dbReference type="KEGG" id="det:DET0802"/>
<dbReference type="PATRIC" id="fig|243164.10.peg.765"/>
<dbReference type="eggNOG" id="COG0853">
    <property type="taxonomic scope" value="Bacteria"/>
</dbReference>
<dbReference type="HOGENOM" id="CLU_115305_2_0_0"/>
<dbReference type="InParanoid" id="Q3Z8B5"/>
<dbReference type="UniPathway" id="UPA00028">
    <property type="reaction ID" value="UER00002"/>
</dbReference>
<dbReference type="Proteomes" id="UP000008289">
    <property type="component" value="Chromosome"/>
</dbReference>
<dbReference type="GO" id="GO:0005829">
    <property type="term" value="C:cytosol"/>
    <property type="evidence" value="ECO:0007669"/>
    <property type="project" value="TreeGrafter"/>
</dbReference>
<dbReference type="GO" id="GO:0004068">
    <property type="term" value="F:aspartate 1-decarboxylase activity"/>
    <property type="evidence" value="ECO:0007669"/>
    <property type="project" value="UniProtKB-UniRule"/>
</dbReference>
<dbReference type="GO" id="GO:0006523">
    <property type="term" value="P:alanine biosynthetic process"/>
    <property type="evidence" value="ECO:0007669"/>
    <property type="project" value="InterPro"/>
</dbReference>
<dbReference type="GO" id="GO:0015940">
    <property type="term" value="P:pantothenate biosynthetic process"/>
    <property type="evidence" value="ECO:0007669"/>
    <property type="project" value="UniProtKB-UniRule"/>
</dbReference>
<dbReference type="CDD" id="cd06919">
    <property type="entry name" value="Asp_decarbox"/>
    <property type="match status" value="1"/>
</dbReference>
<dbReference type="Gene3D" id="2.40.40.20">
    <property type="match status" value="1"/>
</dbReference>
<dbReference type="HAMAP" id="MF_00446">
    <property type="entry name" value="PanD"/>
    <property type="match status" value="1"/>
</dbReference>
<dbReference type="InterPro" id="IPR009010">
    <property type="entry name" value="Asp_de-COase-like_dom_sf"/>
</dbReference>
<dbReference type="InterPro" id="IPR003190">
    <property type="entry name" value="Asp_decarbox"/>
</dbReference>
<dbReference type="NCBIfam" id="TIGR00223">
    <property type="entry name" value="panD"/>
    <property type="match status" value="1"/>
</dbReference>
<dbReference type="PANTHER" id="PTHR21012">
    <property type="entry name" value="ASPARTATE 1-DECARBOXYLASE"/>
    <property type="match status" value="1"/>
</dbReference>
<dbReference type="PANTHER" id="PTHR21012:SF0">
    <property type="entry name" value="ASPARTATE 1-DECARBOXYLASE"/>
    <property type="match status" value="1"/>
</dbReference>
<dbReference type="Pfam" id="PF02261">
    <property type="entry name" value="Asp_decarbox"/>
    <property type="match status" value="1"/>
</dbReference>
<dbReference type="PIRSF" id="PIRSF006246">
    <property type="entry name" value="Asp_decarbox"/>
    <property type="match status" value="1"/>
</dbReference>
<dbReference type="SUPFAM" id="SSF50692">
    <property type="entry name" value="ADC-like"/>
    <property type="match status" value="1"/>
</dbReference>
<gene>
    <name evidence="1" type="primary">panD</name>
    <name type="ordered locus">DET0802</name>
</gene>
<proteinExistence type="inferred from homology"/>
<comment type="function">
    <text evidence="1">Catalyzes the pyruvoyl-dependent decarboxylation of aspartate to produce beta-alanine.</text>
</comment>
<comment type="catalytic activity">
    <reaction evidence="1">
        <text>L-aspartate + H(+) = beta-alanine + CO2</text>
        <dbReference type="Rhea" id="RHEA:19497"/>
        <dbReference type="ChEBI" id="CHEBI:15378"/>
        <dbReference type="ChEBI" id="CHEBI:16526"/>
        <dbReference type="ChEBI" id="CHEBI:29991"/>
        <dbReference type="ChEBI" id="CHEBI:57966"/>
        <dbReference type="EC" id="4.1.1.11"/>
    </reaction>
</comment>
<comment type="cofactor">
    <cofactor evidence="1">
        <name>pyruvate</name>
        <dbReference type="ChEBI" id="CHEBI:15361"/>
    </cofactor>
    <text evidence="1">Binds 1 pyruvoyl group covalently per subunit.</text>
</comment>
<comment type="pathway">
    <text evidence="1">Cofactor biosynthesis; (R)-pantothenate biosynthesis; beta-alanine from L-aspartate: step 1/1.</text>
</comment>
<comment type="subunit">
    <text evidence="1">Heterooctamer of four alpha and four beta subunits.</text>
</comment>
<comment type="subcellular location">
    <subcellularLocation>
        <location evidence="1">Cytoplasm</location>
    </subcellularLocation>
</comment>
<comment type="PTM">
    <text evidence="1">Is synthesized initially as an inactive proenzyme, which is activated by self-cleavage at a specific serine bond to produce a beta-subunit with a hydroxyl group at its C-terminus and an alpha-subunit with a pyruvoyl group at its N-terminus.</text>
</comment>
<comment type="similarity">
    <text evidence="1">Belongs to the PanD family.</text>
</comment>
<protein>
    <recommendedName>
        <fullName evidence="1">Aspartate 1-decarboxylase</fullName>
        <ecNumber evidence="1">4.1.1.11</ecNumber>
    </recommendedName>
    <alternativeName>
        <fullName evidence="1">Aspartate alpha-decarboxylase</fullName>
    </alternativeName>
    <component>
        <recommendedName>
            <fullName evidence="1">Aspartate 1-decarboxylase beta chain</fullName>
        </recommendedName>
    </component>
    <component>
        <recommendedName>
            <fullName evidence="1">Aspartate 1-decarboxylase alpha chain</fullName>
        </recommendedName>
    </component>
</protein>
<reference key="1">
    <citation type="journal article" date="2005" name="Science">
        <title>Genome sequence of the PCE-dechlorinating bacterium Dehalococcoides ethenogenes.</title>
        <authorList>
            <person name="Seshadri R."/>
            <person name="Adrian L."/>
            <person name="Fouts D.E."/>
            <person name="Eisen J.A."/>
            <person name="Phillippy A.M."/>
            <person name="Methe B.A."/>
            <person name="Ward N.L."/>
            <person name="Nelson W.C."/>
            <person name="DeBoy R.T."/>
            <person name="Khouri H.M."/>
            <person name="Kolonay J.F."/>
            <person name="Dodson R.J."/>
            <person name="Daugherty S.C."/>
            <person name="Brinkac L.M."/>
            <person name="Sullivan S.A."/>
            <person name="Madupu R."/>
            <person name="Nelson K.E."/>
            <person name="Kang K.H."/>
            <person name="Impraim M."/>
            <person name="Tran K."/>
            <person name="Robinson J.M."/>
            <person name="Forberger H.A."/>
            <person name="Fraser C.M."/>
            <person name="Zinder S.H."/>
            <person name="Heidelberg J.F."/>
        </authorList>
    </citation>
    <scope>NUCLEOTIDE SEQUENCE [LARGE SCALE GENOMIC DNA]</scope>
    <source>
        <strain>ATCC BAA-2266 / KCTC 15142 / 195</strain>
    </source>
</reference>
<evidence type="ECO:0000255" key="1">
    <source>
        <dbReference type="HAMAP-Rule" id="MF_00446"/>
    </source>
</evidence>
<keyword id="KW-0068">Autocatalytic cleavage</keyword>
<keyword id="KW-0963">Cytoplasm</keyword>
<keyword id="KW-0210">Decarboxylase</keyword>
<keyword id="KW-0456">Lyase</keyword>
<keyword id="KW-0566">Pantothenate biosynthesis</keyword>
<keyword id="KW-0670">Pyruvate</keyword>
<keyword id="KW-0704">Schiff base</keyword>
<keyword id="KW-0865">Zymogen</keyword>